<protein>
    <recommendedName>
        <fullName>Kinesin-like protein KIF22</fullName>
    </recommendedName>
</protein>
<comment type="function">
    <text evidence="1">Kinesin family member that is involved in spindle formation and the movements of chromosomes during mitosis and meiosis. Binds to microtubules and to DNA.</text>
</comment>
<comment type="subcellular location">
    <subcellularLocation>
        <location evidence="1">Nucleus</location>
    </subcellularLocation>
    <subcellularLocation>
        <location evidence="5">Cytoplasm</location>
        <location evidence="5">Cytoskeleton</location>
    </subcellularLocation>
</comment>
<comment type="PTM">
    <text evidence="1">Ubiquitinated, leading to its subsequent proteasomal degradation.</text>
</comment>
<comment type="similarity">
    <text evidence="3">Belongs to the TRAFAC class myosin-kinesin ATPase superfamily. Kinesin family.</text>
</comment>
<evidence type="ECO:0000250" key="1">
    <source>
        <dbReference type="UniProtKB" id="Q9I869"/>
    </source>
</evidence>
<evidence type="ECO:0000255" key="2"/>
<evidence type="ECO:0000255" key="3">
    <source>
        <dbReference type="PROSITE-ProRule" id="PRU00283"/>
    </source>
</evidence>
<evidence type="ECO:0000256" key="4">
    <source>
        <dbReference type="SAM" id="MobiDB-lite"/>
    </source>
</evidence>
<evidence type="ECO:0000305" key="5"/>
<proteinExistence type="evidence at transcript level"/>
<sequence>MAQRVAVNDGAAGSKRTSRVRVAVRLRPYMDKQDEKSEGSCVRGLGPQKLEIINWRNATETLQYQFDVFHGEETTQQEVFLTSVKPILPHILNGQNASVFAYGPTGAGKTHTMLGSQEQPGVIPRAVKEVFNLVGAQKKEQDGWEYSIGMSYLEIYNEKVLDLLSPGSQDLPIREDKDRNILIPGLTHTPLSSFADFDTHFIPASLNRTTASTKLNQRSSRSHAILLIKVVKSQRGPPHRQQTGKLYLVDLAGSEDNRRTGNQGIRLKESGAINLSLFTLSKVVDALNTGAGGRVPYRDSKLTRLLQDSLGGSAHSVMITNIAPEYKYYFDTFSALNFAAKSKQIVNRPFVRETVLAPTIAPGKRTREEQEAGGSGEPQNKRSKEGKKAEHSPSPPLHPQSSPDSSVLDRLLALEKMMMGSAERERLNLLKTVAQSRKEIQMLKEKQKELEDKANMFNKQKETTEKESKDALLFKTDLPPLHRKQSTAAKPRKQQAVVTPLQVSQVQPLQQCAVVCKPSQTLVKKKRVQTEVCDGKENIGVDLPPVEDVNWESRLDPALLEQSRKKILQTLNSGSLKELKSLQQIGDKKAKLIMGWREINGDFTQVEDLKKIEGVTVKRFSSFIKANILSSMGK</sequence>
<organism>
    <name type="scientific">Danio rerio</name>
    <name type="common">Zebrafish</name>
    <name type="synonym">Brachydanio rerio</name>
    <dbReference type="NCBI Taxonomy" id="7955"/>
    <lineage>
        <taxon>Eukaryota</taxon>
        <taxon>Metazoa</taxon>
        <taxon>Chordata</taxon>
        <taxon>Craniata</taxon>
        <taxon>Vertebrata</taxon>
        <taxon>Euteleostomi</taxon>
        <taxon>Actinopterygii</taxon>
        <taxon>Neopterygii</taxon>
        <taxon>Teleostei</taxon>
        <taxon>Ostariophysi</taxon>
        <taxon>Cypriniformes</taxon>
        <taxon>Danionidae</taxon>
        <taxon>Danioninae</taxon>
        <taxon>Danio</taxon>
    </lineage>
</organism>
<accession>A8WFU8</accession>
<feature type="chain" id="PRO_0000347237" description="Kinesin-like protein KIF22">
    <location>
        <begin position="1"/>
        <end position="634"/>
    </location>
</feature>
<feature type="domain" description="Kinesin motor" evidence="3">
    <location>
        <begin position="19"/>
        <end position="345"/>
    </location>
</feature>
<feature type="region of interest" description="Disordered" evidence="4">
    <location>
        <begin position="357"/>
        <end position="406"/>
    </location>
</feature>
<feature type="coiled-coil region" evidence="2">
    <location>
        <begin position="421"/>
        <end position="471"/>
    </location>
</feature>
<feature type="compositionally biased region" description="Basic and acidic residues" evidence="4">
    <location>
        <begin position="379"/>
        <end position="391"/>
    </location>
</feature>
<feature type="binding site" evidence="3">
    <location>
        <begin position="103"/>
        <end position="110"/>
    </location>
    <ligand>
        <name>ATP</name>
        <dbReference type="ChEBI" id="CHEBI:30616"/>
    </ligand>
</feature>
<dbReference type="EMBL" id="BC154464">
    <property type="protein sequence ID" value="AAI54465.1"/>
    <property type="molecule type" value="mRNA"/>
</dbReference>
<dbReference type="RefSeq" id="NP_001107063.1">
    <property type="nucleotide sequence ID" value="NM_001113591.1"/>
</dbReference>
<dbReference type="SMR" id="A8WFU8"/>
<dbReference type="FunCoup" id="A8WFU8">
    <property type="interactions" value="201"/>
</dbReference>
<dbReference type="STRING" id="7955.ENSDARP00000137572"/>
<dbReference type="PaxDb" id="7955-ENSDARP00000103034"/>
<dbReference type="PeptideAtlas" id="A8WFU8"/>
<dbReference type="GeneID" id="561788"/>
<dbReference type="KEGG" id="dre:561788"/>
<dbReference type="AGR" id="ZFIN:ZDB-GENE-080204-34"/>
<dbReference type="CTD" id="3835"/>
<dbReference type="ZFIN" id="ZDB-GENE-080204-34">
    <property type="gene designation" value="kif22"/>
</dbReference>
<dbReference type="eggNOG" id="KOG0242">
    <property type="taxonomic scope" value="Eukaryota"/>
</dbReference>
<dbReference type="InParanoid" id="A8WFU8"/>
<dbReference type="OrthoDB" id="3176171at2759"/>
<dbReference type="Reactome" id="R-DRE-983189">
    <property type="pathway name" value="Kinesins"/>
</dbReference>
<dbReference type="PRO" id="PR:A8WFU8"/>
<dbReference type="Proteomes" id="UP000000437">
    <property type="component" value="Chromosome 12"/>
</dbReference>
<dbReference type="GO" id="GO:0005737">
    <property type="term" value="C:cytoplasm"/>
    <property type="evidence" value="ECO:0000318"/>
    <property type="project" value="GO_Central"/>
</dbReference>
<dbReference type="GO" id="GO:0005871">
    <property type="term" value="C:kinesin complex"/>
    <property type="evidence" value="ECO:0000318"/>
    <property type="project" value="GO_Central"/>
</dbReference>
<dbReference type="GO" id="GO:0005874">
    <property type="term" value="C:microtubule"/>
    <property type="evidence" value="ECO:0000318"/>
    <property type="project" value="GO_Central"/>
</dbReference>
<dbReference type="GO" id="GO:0005634">
    <property type="term" value="C:nucleus"/>
    <property type="evidence" value="ECO:0007669"/>
    <property type="project" value="UniProtKB-SubCell"/>
</dbReference>
<dbReference type="GO" id="GO:0005524">
    <property type="term" value="F:ATP binding"/>
    <property type="evidence" value="ECO:0007669"/>
    <property type="project" value="UniProtKB-KW"/>
</dbReference>
<dbReference type="GO" id="GO:0016887">
    <property type="term" value="F:ATP hydrolysis activity"/>
    <property type="evidence" value="ECO:0000318"/>
    <property type="project" value="GO_Central"/>
</dbReference>
<dbReference type="GO" id="GO:0003677">
    <property type="term" value="F:DNA binding"/>
    <property type="evidence" value="ECO:0007669"/>
    <property type="project" value="UniProtKB-KW"/>
</dbReference>
<dbReference type="GO" id="GO:0008017">
    <property type="term" value="F:microtubule binding"/>
    <property type="evidence" value="ECO:0000318"/>
    <property type="project" value="GO_Central"/>
</dbReference>
<dbReference type="GO" id="GO:0003777">
    <property type="term" value="F:microtubule motor activity"/>
    <property type="evidence" value="ECO:0000318"/>
    <property type="project" value="GO_Central"/>
</dbReference>
<dbReference type="GO" id="GO:0007409">
    <property type="term" value="P:axonogenesis"/>
    <property type="evidence" value="ECO:0000315"/>
    <property type="project" value="ZFIN"/>
</dbReference>
<dbReference type="GO" id="GO:0007420">
    <property type="term" value="P:brain development"/>
    <property type="evidence" value="ECO:0000315"/>
    <property type="project" value="ZFIN"/>
</dbReference>
<dbReference type="GO" id="GO:0021952">
    <property type="term" value="P:central nervous system projection neuron axonogenesis"/>
    <property type="evidence" value="ECO:0000315"/>
    <property type="project" value="ZFIN"/>
</dbReference>
<dbReference type="GO" id="GO:0048592">
    <property type="term" value="P:eye morphogenesis"/>
    <property type="evidence" value="ECO:0000315"/>
    <property type="project" value="ZFIN"/>
</dbReference>
<dbReference type="GO" id="GO:0007018">
    <property type="term" value="P:microtubule-based movement"/>
    <property type="evidence" value="ECO:0000318"/>
    <property type="project" value="GO_Central"/>
</dbReference>
<dbReference type="GO" id="GO:0001756">
    <property type="term" value="P:somitogenesis"/>
    <property type="evidence" value="ECO:0000315"/>
    <property type="project" value="ZFIN"/>
</dbReference>
<dbReference type="GO" id="GO:0001966">
    <property type="term" value="P:thigmotaxis"/>
    <property type="evidence" value="ECO:0000315"/>
    <property type="project" value="ZFIN"/>
</dbReference>
<dbReference type="CDD" id="cd01376">
    <property type="entry name" value="KISc_KID_like"/>
    <property type="match status" value="1"/>
</dbReference>
<dbReference type="FunFam" id="1.10.150.280:FF:000002">
    <property type="entry name" value="Kinesin-like protein"/>
    <property type="match status" value="1"/>
</dbReference>
<dbReference type="FunFam" id="3.40.850.10:FF:000043">
    <property type="entry name" value="Kinesin-like protein"/>
    <property type="match status" value="1"/>
</dbReference>
<dbReference type="Gene3D" id="1.10.150.280">
    <property type="entry name" value="AF1531-like domain"/>
    <property type="match status" value="1"/>
</dbReference>
<dbReference type="Gene3D" id="3.40.850.10">
    <property type="entry name" value="Kinesin motor domain"/>
    <property type="match status" value="1"/>
</dbReference>
<dbReference type="InterPro" id="IPR027640">
    <property type="entry name" value="Kinesin-like_fam"/>
</dbReference>
<dbReference type="InterPro" id="IPR019821">
    <property type="entry name" value="Kinesin_motor_CS"/>
</dbReference>
<dbReference type="InterPro" id="IPR001752">
    <property type="entry name" value="Kinesin_motor_dom"/>
</dbReference>
<dbReference type="InterPro" id="IPR036961">
    <property type="entry name" value="Kinesin_motor_dom_sf"/>
</dbReference>
<dbReference type="InterPro" id="IPR027417">
    <property type="entry name" value="P-loop_NTPase"/>
</dbReference>
<dbReference type="InterPro" id="IPR010994">
    <property type="entry name" value="RuvA_2-like"/>
</dbReference>
<dbReference type="PANTHER" id="PTHR47969">
    <property type="entry name" value="CHROMOSOME-ASSOCIATED KINESIN KIF4A-RELATED"/>
    <property type="match status" value="1"/>
</dbReference>
<dbReference type="PANTHER" id="PTHR47969:SF9">
    <property type="entry name" value="KINESIN-LIKE PROTEIN"/>
    <property type="match status" value="1"/>
</dbReference>
<dbReference type="Pfam" id="PF12836">
    <property type="entry name" value="HHH_3"/>
    <property type="match status" value="1"/>
</dbReference>
<dbReference type="Pfam" id="PF00225">
    <property type="entry name" value="Kinesin"/>
    <property type="match status" value="1"/>
</dbReference>
<dbReference type="PRINTS" id="PR00380">
    <property type="entry name" value="KINESINHEAVY"/>
</dbReference>
<dbReference type="SMART" id="SM00129">
    <property type="entry name" value="KISc"/>
    <property type="match status" value="1"/>
</dbReference>
<dbReference type="SUPFAM" id="SSF52540">
    <property type="entry name" value="P-loop containing nucleoside triphosphate hydrolases"/>
    <property type="match status" value="1"/>
</dbReference>
<dbReference type="SUPFAM" id="SSF47781">
    <property type="entry name" value="RuvA domain 2-like"/>
    <property type="match status" value="1"/>
</dbReference>
<dbReference type="PROSITE" id="PS00411">
    <property type="entry name" value="KINESIN_MOTOR_1"/>
    <property type="match status" value="1"/>
</dbReference>
<dbReference type="PROSITE" id="PS50067">
    <property type="entry name" value="KINESIN_MOTOR_2"/>
    <property type="match status" value="1"/>
</dbReference>
<reference key="1">
    <citation type="submission" date="2007-11" db="EMBL/GenBank/DDBJ databases">
        <authorList>
            <consortium name="NIH - Zebrafish Gene Collection (ZGC) project"/>
        </authorList>
    </citation>
    <scope>NUCLEOTIDE SEQUENCE [LARGE SCALE MRNA]</scope>
    <source>
        <tissue>Ovary</tissue>
    </source>
</reference>
<keyword id="KW-0067">ATP-binding</keyword>
<keyword id="KW-0175">Coiled coil</keyword>
<keyword id="KW-0963">Cytoplasm</keyword>
<keyword id="KW-0206">Cytoskeleton</keyword>
<keyword id="KW-0238">DNA-binding</keyword>
<keyword id="KW-0493">Microtubule</keyword>
<keyword id="KW-0505">Motor protein</keyword>
<keyword id="KW-0547">Nucleotide-binding</keyword>
<keyword id="KW-0539">Nucleus</keyword>
<keyword id="KW-1185">Reference proteome</keyword>
<keyword id="KW-0832">Ubl conjugation</keyword>
<name>KIF22_DANRE</name>
<gene>
    <name type="primary">kif22</name>
    <name type="ORF">zgc:171724</name>
</gene>